<protein>
    <recommendedName>
        <fullName evidence="1">Deoxyuridine 5'-triphosphate nucleotidohydrolase</fullName>
        <shortName evidence="1">dUTPase</shortName>
        <ecNumber evidence="1">3.6.1.23</ecNumber>
    </recommendedName>
    <alternativeName>
        <fullName evidence="1">dUTP pyrophosphatase</fullName>
    </alternativeName>
</protein>
<evidence type="ECO:0000250" key="1">
    <source>
        <dbReference type="UniProtKB" id="P33317"/>
    </source>
</evidence>
<evidence type="ECO:0000305" key="2"/>
<organism>
    <name type="scientific">Antonospora locustae</name>
    <name type="common">Microsporidian parasite</name>
    <name type="synonym">Nosema locustae</name>
    <dbReference type="NCBI Taxonomy" id="278021"/>
    <lineage>
        <taxon>Eukaryota</taxon>
        <taxon>Fungi</taxon>
        <taxon>Fungi incertae sedis</taxon>
        <taxon>Microsporidia</taxon>
        <taxon>Antonospora</taxon>
    </lineage>
</organism>
<keyword id="KW-0378">Hydrolase</keyword>
<keyword id="KW-0460">Magnesium</keyword>
<keyword id="KW-0479">Metal-binding</keyword>
<keyword id="KW-0546">Nucleotide metabolism</keyword>
<feature type="chain" id="PRO_0000182927" description="Deoxyuridine 5'-triphosphate nucleotidohydrolase">
    <location>
        <begin position="1"/>
        <end position="143"/>
    </location>
</feature>
<feature type="binding site" evidence="1">
    <location>
        <position position="65"/>
    </location>
    <ligand>
        <name>dUMP</name>
        <dbReference type="ChEBI" id="CHEBI:246422"/>
    </ligand>
</feature>
<feature type="binding site" evidence="1">
    <location>
        <position position="78"/>
    </location>
    <ligand>
        <name>dUMP</name>
        <dbReference type="ChEBI" id="CHEBI:246422"/>
    </ligand>
</feature>
<feature type="binding site" evidence="1">
    <location>
        <position position="132"/>
    </location>
    <ligand>
        <name>dUMP</name>
        <dbReference type="ChEBI" id="CHEBI:246422"/>
    </ligand>
</feature>
<feature type="binding site" evidence="1">
    <location>
        <position position="138"/>
    </location>
    <ligand>
        <name>dUMP</name>
        <dbReference type="ChEBI" id="CHEBI:246422"/>
    </ligand>
</feature>
<comment type="function">
    <text evidence="1">Involved in nucleotide metabolism via production of dUMP, the immediate precursor of thymidine nucleotides, and decreases the intracellular concentration of dUTP so that uracil cannot be incorporated into DNA.</text>
</comment>
<comment type="catalytic activity">
    <reaction evidence="1">
        <text>dUTP + H2O = dUMP + diphosphate + H(+)</text>
        <dbReference type="Rhea" id="RHEA:10248"/>
        <dbReference type="ChEBI" id="CHEBI:15377"/>
        <dbReference type="ChEBI" id="CHEBI:15378"/>
        <dbReference type="ChEBI" id="CHEBI:33019"/>
        <dbReference type="ChEBI" id="CHEBI:61555"/>
        <dbReference type="ChEBI" id="CHEBI:246422"/>
        <dbReference type="EC" id="3.6.1.23"/>
    </reaction>
    <physiologicalReaction direction="left-to-right" evidence="1">
        <dbReference type="Rhea" id="RHEA:10249"/>
    </physiologicalReaction>
</comment>
<comment type="cofactor">
    <cofactor evidence="1">
        <name>Mg(2+)</name>
        <dbReference type="ChEBI" id="CHEBI:18420"/>
    </cofactor>
</comment>
<comment type="pathway">
    <text>Pyrimidine metabolism; dUMP biosynthesis; dUMP from dCTP (dUTP route): step 2/2.</text>
</comment>
<comment type="subunit">
    <text evidence="1">Homotrimer.</text>
</comment>
<comment type="similarity">
    <text evidence="2">Belongs to the dUTPase family.</text>
</comment>
<gene>
    <name type="primary">DUT1</name>
</gene>
<accession>Q6E4Q0</accession>
<name>DUT_ANTLO</name>
<dbReference type="EC" id="3.6.1.23" evidence="1"/>
<dbReference type="EMBL" id="AY574349">
    <property type="protein sequence ID" value="AAT72741.1"/>
    <property type="molecule type" value="Genomic_DNA"/>
</dbReference>
<dbReference type="SMR" id="Q6E4Q0"/>
<dbReference type="UniPathway" id="UPA00610">
    <property type="reaction ID" value="UER00666"/>
</dbReference>
<dbReference type="GO" id="GO:0004170">
    <property type="term" value="F:dUTP diphosphatase activity"/>
    <property type="evidence" value="ECO:0007669"/>
    <property type="project" value="UniProtKB-EC"/>
</dbReference>
<dbReference type="GO" id="GO:0000287">
    <property type="term" value="F:magnesium ion binding"/>
    <property type="evidence" value="ECO:0007669"/>
    <property type="project" value="InterPro"/>
</dbReference>
<dbReference type="GO" id="GO:0006226">
    <property type="term" value="P:dUMP biosynthetic process"/>
    <property type="evidence" value="ECO:0007669"/>
    <property type="project" value="UniProtKB-UniPathway"/>
</dbReference>
<dbReference type="GO" id="GO:0046081">
    <property type="term" value="P:dUTP catabolic process"/>
    <property type="evidence" value="ECO:0007669"/>
    <property type="project" value="InterPro"/>
</dbReference>
<dbReference type="CDD" id="cd07557">
    <property type="entry name" value="trimeric_dUTPase"/>
    <property type="match status" value="1"/>
</dbReference>
<dbReference type="Gene3D" id="2.70.40.10">
    <property type="match status" value="1"/>
</dbReference>
<dbReference type="InterPro" id="IPR008181">
    <property type="entry name" value="dUTPase"/>
</dbReference>
<dbReference type="InterPro" id="IPR029054">
    <property type="entry name" value="dUTPase-like"/>
</dbReference>
<dbReference type="InterPro" id="IPR036157">
    <property type="entry name" value="dUTPase-like_sf"/>
</dbReference>
<dbReference type="InterPro" id="IPR033704">
    <property type="entry name" value="dUTPase_trimeric"/>
</dbReference>
<dbReference type="NCBIfam" id="TIGR00576">
    <property type="entry name" value="dut"/>
    <property type="match status" value="1"/>
</dbReference>
<dbReference type="PANTHER" id="PTHR11241">
    <property type="entry name" value="DEOXYURIDINE 5'-TRIPHOSPHATE NUCLEOTIDOHYDROLASE"/>
    <property type="match status" value="1"/>
</dbReference>
<dbReference type="PANTHER" id="PTHR11241:SF0">
    <property type="entry name" value="DEOXYURIDINE 5'-TRIPHOSPHATE NUCLEOTIDOHYDROLASE"/>
    <property type="match status" value="1"/>
</dbReference>
<dbReference type="Pfam" id="PF00692">
    <property type="entry name" value="dUTPase"/>
    <property type="match status" value="1"/>
</dbReference>
<dbReference type="SUPFAM" id="SSF51283">
    <property type="entry name" value="dUTPase-like"/>
    <property type="match status" value="1"/>
</dbReference>
<sequence length="143" mass="15526">MSEIITVKRLFSDAKIPVRHSEGAAAYDLYAYEDTVVAPNERKVIATGVRITVPLSCQGTIYSRSGLALKYCIEIFGVNIGPGETKDIVVDIYNHGKMPFNVAKGDRIAQIVFIKLFGGDLHEVSELSDTKRGSCGWGSTGIS</sequence>
<proteinExistence type="inferred from homology"/>
<reference key="1">
    <citation type="journal article" date="2004" name="Curr. Biol.">
        <title>Genome compaction and stability in microsporidian intracellular parasites.</title>
        <authorList>
            <person name="Slamovits C.H."/>
            <person name="Fast N.M."/>
            <person name="Law J.S."/>
            <person name="Keeling P.J."/>
        </authorList>
    </citation>
    <scope>NUCLEOTIDE SEQUENCE [GENOMIC DNA]</scope>
</reference>